<dbReference type="EMBL" id="CP001277">
    <property type="protein sequence ID" value="ACQ68435.1"/>
    <property type="molecule type" value="Genomic_DNA"/>
</dbReference>
<dbReference type="RefSeq" id="WP_015874199.1">
    <property type="nucleotide sequence ID" value="NC_012751.1"/>
</dbReference>
<dbReference type="SMR" id="C4K792"/>
<dbReference type="STRING" id="572265.HDEF_1840"/>
<dbReference type="GeneID" id="66261426"/>
<dbReference type="KEGG" id="hde:HDEF_1840"/>
<dbReference type="eggNOG" id="COG0203">
    <property type="taxonomic scope" value="Bacteria"/>
</dbReference>
<dbReference type="HOGENOM" id="CLU_074407_2_0_6"/>
<dbReference type="Proteomes" id="UP000002334">
    <property type="component" value="Chromosome"/>
</dbReference>
<dbReference type="GO" id="GO:0022625">
    <property type="term" value="C:cytosolic large ribosomal subunit"/>
    <property type="evidence" value="ECO:0007669"/>
    <property type="project" value="TreeGrafter"/>
</dbReference>
<dbReference type="GO" id="GO:0003735">
    <property type="term" value="F:structural constituent of ribosome"/>
    <property type="evidence" value="ECO:0007669"/>
    <property type="project" value="InterPro"/>
</dbReference>
<dbReference type="GO" id="GO:0006412">
    <property type="term" value="P:translation"/>
    <property type="evidence" value="ECO:0007669"/>
    <property type="project" value="UniProtKB-UniRule"/>
</dbReference>
<dbReference type="FunFam" id="3.90.1030.10:FF:000001">
    <property type="entry name" value="50S ribosomal protein L17"/>
    <property type="match status" value="1"/>
</dbReference>
<dbReference type="Gene3D" id="3.90.1030.10">
    <property type="entry name" value="Ribosomal protein L17"/>
    <property type="match status" value="1"/>
</dbReference>
<dbReference type="HAMAP" id="MF_01368">
    <property type="entry name" value="Ribosomal_bL17"/>
    <property type="match status" value="1"/>
</dbReference>
<dbReference type="InterPro" id="IPR000456">
    <property type="entry name" value="Ribosomal_bL17"/>
</dbReference>
<dbReference type="InterPro" id="IPR047859">
    <property type="entry name" value="Ribosomal_bL17_CS"/>
</dbReference>
<dbReference type="InterPro" id="IPR036373">
    <property type="entry name" value="Ribosomal_bL17_sf"/>
</dbReference>
<dbReference type="NCBIfam" id="TIGR00059">
    <property type="entry name" value="L17"/>
    <property type="match status" value="1"/>
</dbReference>
<dbReference type="PANTHER" id="PTHR14413:SF16">
    <property type="entry name" value="LARGE RIBOSOMAL SUBUNIT PROTEIN BL17M"/>
    <property type="match status" value="1"/>
</dbReference>
<dbReference type="PANTHER" id="PTHR14413">
    <property type="entry name" value="RIBOSOMAL PROTEIN L17"/>
    <property type="match status" value="1"/>
</dbReference>
<dbReference type="Pfam" id="PF01196">
    <property type="entry name" value="Ribosomal_L17"/>
    <property type="match status" value="1"/>
</dbReference>
<dbReference type="SUPFAM" id="SSF64263">
    <property type="entry name" value="Prokaryotic ribosomal protein L17"/>
    <property type="match status" value="1"/>
</dbReference>
<dbReference type="PROSITE" id="PS01167">
    <property type="entry name" value="RIBOSOMAL_L17"/>
    <property type="match status" value="1"/>
</dbReference>
<keyword id="KW-0687">Ribonucleoprotein</keyword>
<keyword id="KW-0689">Ribosomal protein</keyword>
<comment type="subunit">
    <text evidence="1">Part of the 50S ribosomal subunit. Contacts protein L32.</text>
</comment>
<comment type="similarity">
    <text evidence="1">Belongs to the bacterial ribosomal protein bL17 family.</text>
</comment>
<sequence length="131" mass="14849">MRHRKSGRQLNRNSSHRRAMFRNMASSLVRHEIIKTTVPKAKELRRVVEPLITLAKTDSVANRRLAFARIRDNDIVVKLFNELGPRFVSRAGGYTRILKCGSRAGDNAPVAYIELLDRSVSEPEPTTHTNA</sequence>
<reference key="1">
    <citation type="journal article" date="2009" name="Proc. Natl. Acad. Sci. U.S.A.">
        <title>Hamiltonella defensa, genome evolution of protective bacterial endosymbiont from pathogenic ancestors.</title>
        <authorList>
            <person name="Degnan P.H."/>
            <person name="Yu Y."/>
            <person name="Sisneros N."/>
            <person name="Wing R.A."/>
            <person name="Moran N.A."/>
        </authorList>
    </citation>
    <scope>NUCLEOTIDE SEQUENCE [LARGE SCALE GENOMIC DNA]</scope>
    <source>
        <strain>5AT</strain>
    </source>
</reference>
<evidence type="ECO:0000255" key="1">
    <source>
        <dbReference type="HAMAP-Rule" id="MF_01368"/>
    </source>
</evidence>
<evidence type="ECO:0000305" key="2"/>
<proteinExistence type="inferred from homology"/>
<protein>
    <recommendedName>
        <fullName evidence="1">Large ribosomal subunit protein bL17</fullName>
    </recommendedName>
    <alternativeName>
        <fullName evidence="2">50S ribosomal protein L17</fullName>
    </alternativeName>
</protein>
<feature type="chain" id="PRO_1000215011" description="Large ribosomal subunit protein bL17">
    <location>
        <begin position="1"/>
        <end position="131"/>
    </location>
</feature>
<accession>C4K792</accession>
<gene>
    <name evidence="1" type="primary">rplQ</name>
    <name type="ordered locus">HDEF_1840</name>
</gene>
<name>RL17_HAMD5</name>
<organism>
    <name type="scientific">Hamiltonella defensa subsp. Acyrthosiphon pisum (strain 5AT)</name>
    <dbReference type="NCBI Taxonomy" id="572265"/>
    <lineage>
        <taxon>Bacteria</taxon>
        <taxon>Pseudomonadati</taxon>
        <taxon>Pseudomonadota</taxon>
        <taxon>Gammaproteobacteria</taxon>
        <taxon>Enterobacterales</taxon>
        <taxon>Enterobacteriaceae</taxon>
        <taxon>aphid secondary symbionts</taxon>
        <taxon>Candidatus Hamiltonella</taxon>
    </lineage>
</organism>